<name>PP427_ARATH</name>
<gene>
    <name type="primary">PCMP-H58</name>
    <name type="ordered locus">At5g50390</name>
    <name type="ORF">MXI22.11</name>
</gene>
<proteinExistence type="evidence at transcript level"/>
<comment type="subcellular location">
    <subcellularLocation>
        <location evidence="2">Plastid</location>
        <location evidence="2">Chloroplast</location>
    </subcellularLocation>
</comment>
<comment type="similarity">
    <text evidence="2">Belongs to the PPR family. PCMP-H subfamily.</text>
</comment>
<comment type="online information" name="Pentatricopeptide repeat proteins">
    <link uri="https://ppr.plantenergy.uwa.edu.au"/>
</comment>
<organism>
    <name type="scientific">Arabidopsis thaliana</name>
    <name type="common">Mouse-ear cress</name>
    <dbReference type="NCBI Taxonomy" id="3702"/>
    <lineage>
        <taxon>Eukaryota</taxon>
        <taxon>Viridiplantae</taxon>
        <taxon>Streptophyta</taxon>
        <taxon>Embryophyta</taxon>
        <taxon>Tracheophyta</taxon>
        <taxon>Spermatophyta</taxon>
        <taxon>Magnoliopsida</taxon>
        <taxon>eudicotyledons</taxon>
        <taxon>Gunneridae</taxon>
        <taxon>Pentapetalae</taxon>
        <taxon>rosids</taxon>
        <taxon>malvids</taxon>
        <taxon>Brassicales</taxon>
        <taxon>Brassicaceae</taxon>
        <taxon>Camelineae</taxon>
        <taxon>Arabidopsis</taxon>
    </lineage>
</organism>
<reference key="1">
    <citation type="journal article" date="1998" name="DNA Res.">
        <title>Structural analysis of Arabidopsis thaliana chromosome 5. VI. Sequence features of the regions of 1,367,185 bp covered by 19 physically assigned P1 and TAC clones.</title>
        <authorList>
            <person name="Kotani H."/>
            <person name="Nakamura Y."/>
            <person name="Sato S."/>
            <person name="Asamizu E."/>
            <person name="Kaneko T."/>
            <person name="Miyajima N."/>
            <person name="Tabata S."/>
        </authorList>
    </citation>
    <scope>NUCLEOTIDE SEQUENCE [LARGE SCALE GENOMIC DNA]</scope>
    <source>
        <strain>cv. Columbia</strain>
    </source>
</reference>
<reference key="2">
    <citation type="journal article" date="2017" name="Plant J.">
        <title>Araport11: a complete reannotation of the Arabidopsis thaliana reference genome.</title>
        <authorList>
            <person name="Cheng C.Y."/>
            <person name="Krishnakumar V."/>
            <person name="Chan A.P."/>
            <person name="Thibaud-Nissen F."/>
            <person name="Schobel S."/>
            <person name="Town C.D."/>
        </authorList>
    </citation>
    <scope>GENOME REANNOTATION</scope>
    <source>
        <strain>cv. Columbia</strain>
    </source>
</reference>
<reference key="3">
    <citation type="journal article" date="2000" name="Plant Mol. Biol.">
        <title>In Arabidopsis thaliana, 1% of the genome codes for a novel protein family unique to plants.</title>
        <authorList>
            <person name="Aubourg S."/>
            <person name="Boudet N."/>
            <person name="Kreis M."/>
            <person name="Lecharny A."/>
        </authorList>
    </citation>
    <scope>GENE FAMILY</scope>
</reference>
<reference key="4">
    <citation type="journal article" date="2004" name="Plant Cell">
        <title>Genome-wide analysis of Arabidopsis pentatricopeptide repeat proteins reveals their essential role in organelle biogenesis.</title>
        <authorList>
            <person name="Lurin C."/>
            <person name="Andres C."/>
            <person name="Aubourg S."/>
            <person name="Bellaoui M."/>
            <person name="Bitton F."/>
            <person name="Bruyere C."/>
            <person name="Caboche M."/>
            <person name="Debast C."/>
            <person name="Gualberto J."/>
            <person name="Hoffmann B."/>
            <person name="Lecharny A."/>
            <person name="Le Ret M."/>
            <person name="Martin-Magniette M.-L."/>
            <person name="Mireau H."/>
            <person name="Peeters N."/>
            <person name="Renou J.-P."/>
            <person name="Szurek B."/>
            <person name="Taconnat L."/>
            <person name="Small I."/>
        </authorList>
    </citation>
    <scope>GENE FAMILY</scope>
</reference>
<keyword id="KW-0150">Chloroplast</keyword>
<keyword id="KW-0934">Plastid</keyword>
<keyword id="KW-1185">Reference proteome</keyword>
<keyword id="KW-0677">Repeat</keyword>
<keyword id="KW-0809">Transit peptide</keyword>
<accession>Q9FK33</accession>
<dbReference type="EMBL" id="AB012248">
    <property type="protein sequence ID" value="BAB09458.1"/>
    <property type="molecule type" value="Genomic_DNA"/>
</dbReference>
<dbReference type="EMBL" id="CP002688">
    <property type="protein sequence ID" value="AED95938.1"/>
    <property type="molecule type" value="Genomic_DNA"/>
</dbReference>
<dbReference type="RefSeq" id="NP_199850.1">
    <property type="nucleotide sequence ID" value="NM_124421.2"/>
</dbReference>
<dbReference type="SMR" id="Q9FK33"/>
<dbReference type="FunCoup" id="Q9FK33">
    <property type="interactions" value="1589"/>
</dbReference>
<dbReference type="STRING" id="3702.Q9FK33"/>
<dbReference type="PaxDb" id="3702-AT5G50390.1"/>
<dbReference type="ProteomicsDB" id="249308"/>
<dbReference type="EnsemblPlants" id="AT5G50390.1">
    <property type="protein sequence ID" value="AT5G50390.1"/>
    <property type="gene ID" value="AT5G50390"/>
</dbReference>
<dbReference type="GeneID" id="835107"/>
<dbReference type="Gramene" id="AT5G50390.1">
    <property type="protein sequence ID" value="AT5G50390.1"/>
    <property type="gene ID" value="AT5G50390"/>
</dbReference>
<dbReference type="KEGG" id="ath:AT5G50390"/>
<dbReference type="Araport" id="AT5G50390"/>
<dbReference type="TAIR" id="AT5G50390">
    <property type="gene designation" value="EMB3141"/>
</dbReference>
<dbReference type="eggNOG" id="KOG4197">
    <property type="taxonomic scope" value="Eukaryota"/>
</dbReference>
<dbReference type="HOGENOM" id="CLU_002706_37_8_1"/>
<dbReference type="InParanoid" id="Q9FK33"/>
<dbReference type="OMA" id="ACIIELF"/>
<dbReference type="PhylomeDB" id="Q9FK33"/>
<dbReference type="PRO" id="PR:Q9FK33"/>
<dbReference type="Proteomes" id="UP000006548">
    <property type="component" value="Chromosome 5"/>
</dbReference>
<dbReference type="ExpressionAtlas" id="Q9FK33">
    <property type="expression patterns" value="baseline and differential"/>
</dbReference>
<dbReference type="GO" id="GO:0009507">
    <property type="term" value="C:chloroplast"/>
    <property type="evidence" value="ECO:0007669"/>
    <property type="project" value="UniProtKB-SubCell"/>
</dbReference>
<dbReference type="GO" id="GO:0003723">
    <property type="term" value="F:RNA binding"/>
    <property type="evidence" value="ECO:0007669"/>
    <property type="project" value="InterPro"/>
</dbReference>
<dbReference type="GO" id="GO:0008270">
    <property type="term" value="F:zinc ion binding"/>
    <property type="evidence" value="ECO:0007669"/>
    <property type="project" value="InterPro"/>
</dbReference>
<dbReference type="GO" id="GO:0009451">
    <property type="term" value="P:RNA modification"/>
    <property type="evidence" value="ECO:0007669"/>
    <property type="project" value="InterPro"/>
</dbReference>
<dbReference type="FunFam" id="1.25.40.10:FF:000344">
    <property type="entry name" value="Pentatricopeptide repeat-containing protein"/>
    <property type="match status" value="1"/>
</dbReference>
<dbReference type="FunFam" id="1.25.40.10:FF:002966">
    <property type="entry name" value="Pentatricopeptide repeat-containing protein At5g50390, chloroplastic"/>
    <property type="match status" value="1"/>
</dbReference>
<dbReference type="FunFam" id="1.25.40.10:FF:000488">
    <property type="entry name" value="Pentatricopeptide repeat-containing protein, mitochondrial"/>
    <property type="match status" value="1"/>
</dbReference>
<dbReference type="Gene3D" id="1.25.40.10">
    <property type="entry name" value="Tetratricopeptide repeat domain"/>
    <property type="match status" value="3"/>
</dbReference>
<dbReference type="InterPro" id="IPR032867">
    <property type="entry name" value="DYW_dom"/>
</dbReference>
<dbReference type="InterPro" id="IPR046848">
    <property type="entry name" value="E_motif"/>
</dbReference>
<dbReference type="InterPro" id="IPR002885">
    <property type="entry name" value="Pentatricopeptide_rpt"/>
</dbReference>
<dbReference type="InterPro" id="IPR046960">
    <property type="entry name" value="PPR_At4g14850-like_plant"/>
</dbReference>
<dbReference type="InterPro" id="IPR011990">
    <property type="entry name" value="TPR-like_helical_dom_sf"/>
</dbReference>
<dbReference type="NCBIfam" id="TIGR00756">
    <property type="entry name" value="PPR"/>
    <property type="match status" value="4"/>
</dbReference>
<dbReference type="PANTHER" id="PTHR47926:SF359">
    <property type="entry name" value="PENTACOTRIPEPTIDE-REPEAT REGION OF PRORP DOMAIN-CONTAINING PROTEIN"/>
    <property type="match status" value="1"/>
</dbReference>
<dbReference type="PANTHER" id="PTHR47926">
    <property type="entry name" value="PENTATRICOPEPTIDE REPEAT-CONTAINING PROTEIN"/>
    <property type="match status" value="1"/>
</dbReference>
<dbReference type="Pfam" id="PF14432">
    <property type="entry name" value="DYW_deaminase"/>
    <property type="match status" value="1"/>
</dbReference>
<dbReference type="Pfam" id="PF20431">
    <property type="entry name" value="E_motif"/>
    <property type="match status" value="1"/>
</dbReference>
<dbReference type="Pfam" id="PF01535">
    <property type="entry name" value="PPR"/>
    <property type="match status" value="3"/>
</dbReference>
<dbReference type="Pfam" id="PF13041">
    <property type="entry name" value="PPR_2"/>
    <property type="match status" value="2"/>
</dbReference>
<dbReference type="PROSITE" id="PS51375">
    <property type="entry name" value="PPR"/>
    <property type="match status" value="12"/>
</dbReference>
<sequence>MEIPLSRYQSIRLDEIRDSSSNPKVLTFPRKFSLRGRRWKNPFGRLSCSSVVQGLKPKPKLKPEPIRIEVKESKDQILDDTQISKSGVTICSQIEKLVLCNRFREAFELFEILEIRCSFKVGVSTYDALVEACIRLKSIRCVKRVYGFMMSNGFEPEQYMMNRILLMHVKCGMIIDARRLFDEIPERNLYSYYSIISGFVNFGNYVEAFELFKMMWEELSDCETHTFAVMLRASAGLGSIYVGKQLHVCALKLGVVDNTFVSCGLIDMYSKCGDIEDARCAFECMPEKTTVAWNNVIAGYALHGYSEEALCLLYDMRDSGVSIDQFTLSIMIRISTKLAKLELTKQAHASLIRNGFESEIVANTALVDFYSKWGRVDTARYVFDKLPRKNIISWNALMGGYANHGRGTDAVKLFEKMIAANVAPNHVTFLAVLSACAYSGLSEQGWEIFLSMSEVHGIKPRAMHYACMIELLGRDGLLDEAIAFIRRAPLKTTVNMWAALLNACRMQENLELGRVVAEKLYGMGPEKLGNYVVMYNMYNSMGKTAEAAGVLETLESKGLSMMPACTWVEVGDQTHSFLSGDRFDSYNETVKRQIYQKVDELMEEISEYGYSEEEQHLLPDVDEKEEERVGRYHSEKLAIAYGLVNTPEWNPLQITQNHRICKNCHKVVEFISLVTGREMVVRDASRFHHFKEGKCSCGGYW</sequence>
<feature type="transit peptide" description="Chloroplast" evidence="1">
    <location>
        <begin position="1"/>
        <end position="47"/>
    </location>
</feature>
<feature type="chain" id="PRO_0000363564" description="Pentatricopeptide repeat-containing protein At5g50390, chloroplastic">
    <location>
        <begin position="48"/>
        <end position="701"/>
    </location>
</feature>
<feature type="repeat" description="PPR 1">
    <location>
        <begin position="86"/>
        <end position="116"/>
    </location>
</feature>
<feature type="repeat" description="PPR 2">
    <location>
        <begin position="122"/>
        <end position="156"/>
    </location>
</feature>
<feature type="repeat" description="PPR 3">
    <location>
        <begin position="157"/>
        <end position="187"/>
    </location>
</feature>
<feature type="repeat" description="PPR 4">
    <location>
        <begin position="188"/>
        <end position="218"/>
    </location>
</feature>
<feature type="repeat" description="PPR 5">
    <location>
        <begin position="223"/>
        <end position="257"/>
    </location>
</feature>
<feature type="repeat" description="PPR 6">
    <location>
        <begin position="258"/>
        <end position="288"/>
    </location>
</feature>
<feature type="repeat" description="PPR 7">
    <location>
        <begin position="289"/>
        <end position="323"/>
    </location>
</feature>
<feature type="repeat" description="PPR 8">
    <location>
        <begin position="324"/>
        <end position="358"/>
    </location>
</feature>
<feature type="repeat" description="PPR 9">
    <location>
        <begin position="359"/>
        <end position="389"/>
    </location>
</feature>
<feature type="repeat" description="PPR 10">
    <location>
        <begin position="390"/>
        <end position="424"/>
    </location>
</feature>
<feature type="repeat" description="PPR 11">
    <location>
        <begin position="425"/>
        <end position="460"/>
    </location>
</feature>
<feature type="repeat" description="PPR 12">
    <location>
        <begin position="461"/>
        <end position="491"/>
    </location>
</feature>
<feature type="region of interest" description="Type E motif">
    <location>
        <begin position="496"/>
        <end position="571"/>
    </location>
</feature>
<feature type="region of interest" description="Type E(+) motif; degenerate">
    <location>
        <begin position="572"/>
        <end position="606"/>
    </location>
</feature>
<feature type="region of interest" description="Type DYW motif">
    <location>
        <begin position="607"/>
        <end position="701"/>
    </location>
</feature>
<protein>
    <recommendedName>
        <fullName>Pentatricopeptide repeat-containing protein At5g50390, chloroplastic</fullName>
    </recommendedName>
</protein>
<evidence type="ECO:0000255" key="1"/>
<evidence type="ECO:0000305" key="2"/>